<dbReference type="EMBL" id="CP000034">
    <property type="protein sequence ID" value="ABB60413.1"/>
    <property type="molecule type" value="Genomic_DNA"/>
</dbReference>
<dbReference type="RefSeq" id="WP_000272188.1">
    <property type="nucleotide sequence ID" value="NC_007606.1"/>
</dbReference>
<dbReference type="RefSeq" id="YP_401902.1">
    <property type="nucleotide sequence ID" value="NC_007606.1"/>
</dbReference>
<dbReference type="SMR" id="Q32JU4"/>
<dbReference type="STRING" id="300267.SDY_0181"/>
<dbReference type="EnsemblBacteria" id="ABB60413">
    <property type="protein sequence ID" value="ABB60413"/>
    <property type="gene ID" value="SDY_0181"/>
</dbReference>
<dbReference type="KEGG" id="sdy:SDY_0181"/>
<dbReference type="PATRIC" id="fig|300267.13.peg.210"/>
<dbReference type="HOGENOM" id="CLU_136774_0_0_6"/>
<dbReference type="Proteomes" id="UP000002716">
    <property type="component" value="Chromosome"/>
</dbReference>
<dbReference type="HAMAP" id="MF_01519">
    <property type="entry name" value="UPF0325"/>
    <property type="match status" value="1"/>
</dbReference>
<dbReference type="InterPro" id="IPR020911">
    <property type="entry name" value="UPF0325"/>
</dbReference>
<dbReference type="NCBIfam" id="NF010213">
    <property type="entry name" value="PRK13677.1"/>
    <property type="match status" value="1"/>
</dbReference>
<dbReference type="Pfam" id="PF11944">
    <property type="entry name" value="DUF3461"/>
    <property type="match status" value="1"/>
</dbReference>
<keyword id="KW-1185">Reference proteome</keyword>
<evidence type="ECO:0000255" key="1">
    <source>
        <dbReference type="HAMAP-Rule" id="MF_01519"/>
    </source>
</evidence>
<sequence length="128" mass="15096">MYDNLKSLGITNPEEIDRYSLRQEANNDILKIYFQKDKGEFFAKSVKFKYPRQRKTVVADGVGQGYKEVQEISPNLRYIIDELDQICQRDRSEVDLKRKILDDLRHLESVVTNKISEIEADLEKLTRK</sequence>
<comment type="similarity">
    <text evidence="1">Belongs to the UPF0325 family.</text>
</comment>
<name>YAEH_SHIDS</name>
<reference key="1">
    <citation type="journal article" date="2005" name="Nucleic Acids Res.">
        <title>Genome dynamics and diversity of Shigella species, the etiologic agents of bacillary dysentery.</title>
        <authorList>
            <person name="Yang F."/>
            <person name="Yang J."/>
            <person name="Zhang X."/>
            <person name="Chen L."/>
            <person name="Jiang Y."/>
            <person name="Yan Y."/>
            <person name="Tang X."/>
            <person name="Wang J."/>
            <person name="Xiong Z."/>
            <person name="Dong J."/>
            <person name="Xue Y."/>
            <person name="Zhu Y."/>
            <person name="Xu X."/>
            <person name="Sun L."/>
            <person name="Chen S."/>
            <person name="Nie H."/>
            <person name="Peng J."/>
            <person name="Xu J."/>
            <person name="Wang Y."/>
            <person name="Yuan Z."/>
            <person name="Wen Y."/>
            <person name="Yao Z."/>
            <person name="Shen Y."/>
            <person name="Qiang B."/>
            <person name="Hou Y."/>
            <person name="Yu J."/>
            <person name="Jin Q."/>
        </authorList>
    </citation>
    <scope>NUCLEOTIDE SEQUENCE [LARGE SCALE GENOMIC DNA]</scope>
    <source>
        <strain>Sd197</strain>
    </source>
</reference>
<proteinExistence type="inferred from homology"/>
<protein>
    <recommendedName>
        <fullName evidence="1">UPF0325 protein YaeH</fullName>
    </recommendedName>
</protein>
<feature type="chain" id="PRO_0000244254" description="UPF0325 protein YaeH">
    <location>
        <begin position="1"/>
        <end position="128"/>
    </location>
</feature>
<organism>
    <name type="scientific">Shigella dysenteriae serotype 1 (strain Sd197)</name>
    <dbReference type="NCBI Taxonomy" id="300267"/>
    <lineage>
        <taxon>Bacteria</taxon>
        <taxon>Pseudomonadati</taxon>
        <taxon>Pseudomonadota</taxon>
        <taxon>Gammaproteobacteria</taxon>
        <taxon>Enterobacterales</taxon>
        <taxon>Enterobacteriaceae</taxon>
        <taxon>Shigella</taxon>
    </lineage>
</organism>
<gene>
    <name evidence="1" type="primary">yaeH</name>
    <name type="ordered locus">SDY_0181</name>
</gene>
<accession>Q32JU4</accession>